<sequence length="91" mass="10341">MTDTEVKAPKIEFPQVDYPVKVISDTGVGNKDKIIDIVKKHARINDERVDERQSSNGKYTTIQLHIVATDQDQLYNINSELRATGFVHMVL</sequence>
<protein>
    <recommendedName>
        <fullName evidence="1">UPF0250 protein Pfl01_4965</fullName>
    </recommendedName>
</protein>
<gene>
    <name type="ordered locus">Pfl01_4965</name>
</gene>
<name>Y4965_PSEPF</name>
<feature type="chain" id="PRO_1000061884" description="UPF0250 protein Pfl01_4965">
    <location>
        <begin position="1"/>
        <end position="91"/>
    </location>
</feature>
<accession>Q3K6A2</accession>
<evidence type="ECO:0000255" key="1">
    <source>
        <dbReference type="HAMAP-Rule" id="MF_00659"/>
    </source>
</evidence>
<reference key="1">
    <citation type="journal article" date="2009" name="Genome Biol.">
        <title>Genomic and genetic analyses of diversity and plant interactions of Pseudomonas fluorescens.</title>
        <authorList>
            <person name="Silby M.W."/>
            <person name="Cerdeno-Tarraga A.M."/>
            <person name="Vernikos G.S."/>
            <person name="Giddens S.R."/>
            <person name="Jackson R.W."/>
            <person name="Preston G.M."/>
            <person name="Zhang X.-X."/>
            <person name="Moon C.D."/>
            <person name="Gehrig S.M."/>
            <person name="Godfrey S.A.C."/>
            <person name="Knight C.G."/>
            <person name="Malone J.G."/>
            <person name="Robinson Z."/>
            <person name="Spiers A.J."/>
            <person name="Harris S."/>
            <person name="Challis G.L."/>
            <person name="Yaxley A.M."/>
            <person name="Harris D."/>
            <person name="Seeger K."/>
            <person name="Murphy L."/>
            <person name="Rutter S."/>
            <person name="Squares R."/>
            <person name="Quail M.A."/>
            <person name="Saunders E."/>
            <person name="Mavromatis K."/>
            <person name="Brettin T.S."/>
            <person name="Bentley S.D."/>
            <person name="Hothersall J."/>
            <person name="Stephens E."/>
            <person name="Thomas C.M."/>
            <person name="Parkhill J."/>
            <person name="Levy S.B."/>
            <person name="Rainey P.B."/>
            <person name="Thomson N.R."/>
        </authorList>
    </citation>
    <scope>NUCLEOTIDE SEQUENCE [LARGE SCALE GENOMIC DNA]</scope>
    <source>
        <strain>Pf0-1</strain>
    </source>
</reference>
<organism>
    <name type="scientific">Pseudomonas fluorescens (strain Pf0-1)</name>
    <dbReference type="NCBI Taxonomy" id="205922"/>
    <lineage>
        <taxon>Bacteria</taxon>
        <taxon>Pseudomonadati</taxon>
        <taxon>Pseudomonadota</taxon>
        <taxon>Gammaproteobacteria</taxon>
        <taxon>Pseudomonadales</taxon>
        <taxon>Pseudomonadaceae</taxon>
        <taxon>Pseudomonas</taxon>
    </lineage>
</organism>
<dbReference type="EMBL" id="CP000094">
    <property type="protein sequence ID" value="ABA76702.1"/>
    <property type="molecule type" value="Genomic_DNA"/>
</dbReference>
<dbReference type="RefSeq" id="WP_011336094.1">
    <property type="nucleotide sequence ID" value="NC_007492.2"/>
</dbReference>
<dbReference type="SMR" id="Q3K6A2"/>
<dbReference type="KEGG" id="pfo:Pfl01_4965"/>
<dbReference type="eggNOG" id="COG2921">
    <property type="taxonomic scope" value="Bacteria"/>
</dbReference>
<dbReference type="HOGENOM" id="CLU_161438_1_0_6"/>
<dbReference type="Proteomes" id="UP000002704">
    <property type="component" value="Chromosome"/>
</dbReference>
<dbReference type="GO" id="GO:0005829">
    <property type="term" value="C:cytosol"/>
    <property type="evidence" value="ECO:0007669"/>
    <property type="project" value="TreeGrafter"/>
</dbReference>
<dbReference type="Gene3D" id="3.30.70.260">
    <property type="match status" value="1"/>
</dbReference>
<dbReference type="HAMAP" id="MF_00659">
    <property type="entry name" value="UPF0250"/>
    <property type="match status" value="1"/>
</dbReference>
<dbReference type="InterPro" id="IPR007454">
    <property type="entry name" value="UPF0250_YbeD-like"/>
</dbReference>
<dbReference type="InterPro" id="IPR027471">
    <property type="entry name" value="YbeD-like_sf"/>
</dbReference>
<dbReference type="NCBIfam" id="NF001486">
    <property type="entry name" value="PRK00341.1"/>
    <property type="match status" value="1"/>
</dbReference>
<dbReference type="PANTHER" id="PTHR38036">
    <property type="entry name" value="UPF0250 PROTEIN YBED"/>
    <property type="match status" value="1"/>
</dbReference>
<dbReference type="PANTHER" id="PTHR38036:SF1">
    <property type="entry name" value="UPF0250 PROTEIN YBED"/>
    <property type="match status" value="1"/>
</dbReference>
<dbReference type="Pfam" id="PF04359">
    <property type="entry name" value="DUF493"/>
    <property type="match status" value="1"/>
</dbReference>
<dbReference type="SUPFAM" id="SSF117991">
    <property type="entry name" value="YbeD/HP0495-like"/>
    <property type="match status" value="1"/>
</dbReference>
<comment type="similarity">
    <text evidence="1">Belongs to the UPF0250 family.</text>
</comment>
<proteinExistence type="inferred from homology"/>